<gene>
    <name evidence="1" type="primary">pnp</name>
    <name type="ordered locus">ECDH10B_3337</name>
</gene>
<reference key="1">
    <citation type="journal article" date="2008" name="J. Bacteriol.">
        <title>The complete genome sequence of Escherichia coli DH10B: insights into the biology of a laboratory workhorse.</title>
        <authorList>
            <person name="Durfee T."/>
            <person name="Nelson R."/>
            <person name="Baldwin S."/>
            <person name="Plunkett G. III"/>
            <person name="Burland V."/>
            <person name="Mau B."/>
            <person name="Petrosino J.F."/>
            <person name="Qin X."/>
            <person name="Muzny D.M."/>
            <person name="Ayele M."/>
            <person name="Gibbs R.A."/>
            <person name="Csorgo B."/>
            <person name="Posfai G."/>
            <person name="Weinstock G.M."/>
            <person name="Blattner F.R."/>
        </authorList>
    </citation>
    <scope>NUCLEOTIDE SEQUENCE [LARGE SCALE GENOMIC DNA]</scope>
    <source>
        <strain>K12 / DH10B</strain>
    </source>
</reference>
<proteinExistence type="inferred from homology"/>
<feature type="chain" id="PRO_0000381888" description="Polyribonucleotide nucleotidyltransferase">
    <location>
        <begin position="1"/>
        <end position="711"/>
    </location>
</feature>
<feature type="domain" description="KH" evidence="1">
    <location>
        <begin position="553"/>
        <end position="612"/>
    </location>
</feature>
<feature type="domain" description="S1 motif" evidence="1">
    <location>
        <begin position="622"/>
        <end position="690"/>
    </location>
</feature>
<feature type="region of interest" description="Disordered" evidence="2">
    <location>
        <begin position="689"/>
        <end position="711"/>
    </location>
</feature>
<feature type="compositionally biased region" description="Low complexity" evidence="2">
    <location>
        <begin position="694"/>
        <end position="711"/>
    </location>
</feature>
<feature type="binding site" evidence="1">
    <location>
        <position position="486"/>
    </location>
    <ligand>
        <name>Mg(2+)</name>
        <dbReference type="ChEBI" id="CHEBI:18420"/>
    </ligand>
</feature>
<feature type="binding site" evidence="1">
    <location>
        <position position="492"/>
    </location>
    <ligand>
        <name>Mg(2+)</name>
        <dbReference type="ChEBI" id="CHEBI:18420"/>
    </ligand>
</feature>
<organism>
    <name type="scientific">Escherichia coli (strain K12 / DH10B)</name>
    <dbReference type="NCBI Taxonomy" id="316385"/>
    <lineage>
        <taxon>Bacteria</taxon>
        <taxon>Pseudomonadati</taxon>
        <taxon>Pseudomonadota</taxon>
        <taxon>Gammaproteobacteria</taxon>
        <taxon>Enterobacterales</taxon>
        <taxon>Enterobacteriaceae</taxon>
        <taxon>Escherichia</taxon>
    </lineage>
</organism>
<sequence>MLNPIVRKFQYGQHTVTLETGMMARQATAAVMVSMDDTAVFVTVVGQKKAKPGQDFFPLTVNYQERTYAAGRIPGSFFRREGRPSEGETLIARLIDRPIRPLFPEGFVNEVQVIATVVSVNPQVNPDIVAMIGASAALSLSGIPFNGPIGAARVGYINDQYVLNPTQDELKESKLDLVVAGTEAAVLMVESEAQLLSEDQMLGAVVFGHEQQQVVIQNINELVKEAGKPRWDWQPEPVNEALNARVAALAEARLSDAYRITDKQERYAQVDVIKSETIATLLAEDETLDENELGEILHAIEKNVVRSRVLAGEPRIDGREKDMIRGLDVRTGVLPRTHGSALFTRGETQALVTATLGTARDAQVLDELMGERTDTFLFHYNFPPYSVGETGMVGSPKRREIGHGRLAKRGVLAVMPDMDKFPYTVRVVSEITESNGSSSMASVCGASLALMDAGVPIKAAVAGIAMGLVKEGDNYVVLSDILGDEDHLGDMDFKVAGSRDGISALQMDIKIEGITKEIMQVALNQAKGARLHILGVMEQAINAPRGDISEFAPRIHTIKINPDKIKDVIGKGGSVIRALTEETGTTIEIEDDGTVKIAATDGEKAKHAIRRIEEITAEIEVGRVYTGKVTRIVDFGAFVAIGGGKEGLVHISQIADKRVEKVTDYLQMGQEVPVKVLEVDRQGRIRLSIKEATEQSQPAAAPEAPAAEQGE</sequence>
<name>PNP_ECODH</name>
<protein>
    <recommendedName>
        <fullName evidence="1">Polyribonucleotide nucleotidyltransferase</fullName>
        <ecNumber evidence="1">2.7.7.8</ecNumber>
    </recommendedName>
    <alternativeName>
        <fullName evidence="1">Polynucleotide phosphorylase</fullName>
        <shortName evidence="1">PNPase</shortName>
    </alternativeName>
</protein>
<dbReference type="EC" id="2.7.7.8" evidence="1"/>
<dbReference type="EMBL" id="CP000948">
    <property type="protein sequence ID" value="ACB04243.1"/>
    <property type="status" value="ALT_INIT"/>
    <property type="molecule type" value="Genomic_DNA"/>
</dbReference>
<dbReference type="RefSeq" id="WP_001295554.1">
    <property type="nucleotide sequence ID" value="NC_010473.1"/>
</dbReference>
<dbReference type="SMR" id="B1XGX6"/>
<dbReference type="KEGG" id="ecd:ECDH10B_3337"/>
<dbReference type="HOGENOM" id="CLU_004217_2_2_6"/>
<dbReference type="GO" id="GO:0005829">
    <property type="term" value="C:cytosol"/>
    <property type="evidence" value="ECO:0007669"/>
    <property type="project" value="TreeGrafter"/>
</dbReference>
<dbReference type="GO" id="GO:0000175">
    <property type="term" value="F:3'-5'-RNA exonuclease activity"/>
    <property type="evidence" value="ECO:0007669"/>
    <property type="project" value="TreeGrafter"/>
</dbReference>
<dbReference type="GO" id="GO:0000287">
    <property type="term" value="F:magnesium ion binding"/>
    <property type="evidence" value="ECO:0007669"/>
    <property type="project" value="UniProtKB-UniRule"/>
</dbReference>
<dbReference type="GO" id="GO:0004654">
    <property type="term" value="F:polyribonucleotide nucleotidyltransferase activity"/>
    <property type="evidence" value="ECO:0007669"/>
    <property type="project" value="UniProtKB-UniRule"/>
</dbReference>
<dbReference type="GO" id="GO:0003723">
    <property type="term" value="F:RNA binding"/>
    <property type="evidence" value="ECO:0007669"/>
    <property type="project" value="UniProtKB-UniRule"/>
</dbReference>
<dbReference type="GO" id="GO:0006402">
    <property type="term" value="P:mRNA catabolic process"/>
    <property type="evidence" value="ECO:0007669"/>
    <property type="project" value="UniProtKB-UniRule"/>
</dbReference>
<dbReference type="GO" id="GO:0006396">
    <property type="term" value="P:RNA processing"/>
    <property type="evidence" value="ECO:0007669"/>
    <property type="project" value="InterPro"/>
</dbReference>
<dbReference type="CDD" id="cd02393">
    <property type="entry name" value="KH-I_PNPase"/>
    <property type="match status" value="1"/>
</dbReference>
<dbReference type="CDD" id="cd11363">
    <property type="entry name" value="RNase_PH_PNPase_1"/>
    <property type="match status" value="1"/>
</dbReference>
<dbReference type="CDD" id="cd11364">
    <property type="entry name" value="RNase_PH_PNPase_2"/>
    <property type="match status" value="1"/>
</dbReference>
<dbReference type="CDD" id="cd04472">
    <property type="entry name" value="S1_PNPase"/>
    <property type="match status" value="1"/>
</dbReference>
<dbReference type="FunFam" id="2.40.50.140:FF:000023">
    <property type="entry name" value="Polyribonucleotide nucleotidyltransferase"/>
    <property type="match status" value="1"/>
</dbReference>
<dbReference type="FunFam" id="3.30.1370.10:FF:000001">
    <property type="entry name" value="Polyribonucleotide nucleotidyltransferase"/>
    <property type="match status" value="1"/>
</dbReference>
<dbReference type="FunFam" id="3.30.230.70:FF:000001">
    <property type="entry name" value="Polyribonucleotide nucleotidyltransferase"/>
    <property type="match status" value="1"/>
</dbReference>
<dbReference type="FunFam" id="3.30.230.70:FF:000002">
    <property type="entry name" value="Polyribonucleotide nucleotidyltransferase"/>
    <property type="match status" value="1"/>
</dbReference>
<dbReference type="Gene3D" id="3.30.230.70">
    <property type="entry name" value="GHMP Kinase, N-terminal domain"/>
    <property type="match status" value="2"/>
</dbReference>
<dbReference type="Gene3D" id="3.30.1370.10">
    <property type="entry name" value="K Homology domain, type 1"/>
    <property type="match status" value="1"/>
</dbReference>
<dbReference type="Gene3D" id="2.40.50.140">
    <property type="entry name" value="Nucleic acid-binding proteins"/>
    <property type="match status" value="1"/>
</dbReference>
<dbReference type="HAMAP" id="MF_01595">
    <property type="entry name" value="PNPase"/>
    <property type="match status" value="1"/>
</dbReference>
<dbReference type="InterPro" id="IPR001247">
    <property type="entry name" value="ExoRNase_PH_dom1"/>
</dbReference>
<dbReference type="InterPro" id="IPR015847">
    <property type="entry name" value="ExoRNase_PH_dom2"/>
</dbReference>
<dbReference type="InterPro" id="IPR036345">
    <property type="entry name" value="ExoRNase_PH_dom2_sf"/>
</dbReference>
<dbReference type="InterPro" id="IPR004087">
    <property type="entry name" value="KH_dom"/>
</dbReference>
<dbReference type="InterPro" id="IPR004088">
    <property type="entry name" value="KH_dom_type_1"/>
</dbReference>
<dbReference type="InterPro" id="IPR036612">
    <property type="entry name" value="KH_dom_type_1_sf"/>
</dbReference>
<dbReference type="InterPro" id="IPR012340">
    <property type="entry name" value="NA-bd_OB-fold"/>
</dbReference>
<dbReference type="InterPro" id="IPR012162">
    <property type="entry name" value="PNPase"/>
</dbReference>
<dbReference type="InterPro" id="IPR027408">
    <property type="entry name" value="PNPase/RNase_PH_dom_sf"/>
</dbReference>
<dbReference type="InterPro" id="IPR015848">
    <property type="entry name" value="PNPase_PH_RNA-bd_bac/org-type"/>
</dbReference>
<dbReference type="InterPro" id="IPR036456">
    <property type="entry name" value="PNPase_PH_RNA-bd_sf"/>
</dbReference>
<dbReference type="InterPro" id="IPR020568">
    <property type="entry name" value="Ribosomal_Su5_D2-typ_SF"/>
</dbReference>
<dbReference type="InterPro" id="IPR003029">
    <property type="entry name" value="S1_domain"/>
</dbReference>
<dbReference type="NCBIfam" id="TIGR03591">
    <property type="entry name" value="polynuc_phos"/>
    <property type="match status" value="1"/>
</dbReference>
<dbReference type="NCBIfam" id="NF008805">
    <property type="entry name" value="PRK11824.1"/>
    <property type="match status" value="1"/>
</dbReference>
<dbReference type="PANTHER" id="PTHR11252">
    <property type="entry name" value="POLYRIBONUCLEOTIDE NUCLEOTIDYLTRANSFERASE"/>
    <property type="match status" value="1"/>
</dbReference>
<dbReference type="PANTHER" id="PTHR11252:SF0">
    <property type="entry name" value="POLYRIBONUCLEOTIDE NUCLEOTIDYLTRANSFERASE 1, MITOCHONDRIAL"/>
    <property type="match status" value="1"/>
</dbReference>
<dbReference type="Pfam" id="PF00013">
    <property type="entry name" value="KH_1"/>
    <property type="match status" value="1"/>
</dbReference>
<dbReference type="Pfam" id="PF03726">
    <property type="entry name" value="PNPase"/>
    <property type="match status" value="1"/>
</dbReference>
<dbReference type="Pfam" id="PF01138">
    <property type="entry name" value="RNase_PH"/>
    <property type="match status" value="2"/>
</dbReference>
<dbReference type="Pfam" id="PF03725">
    <property type="entry name" value="RNase_PH_C"/>
    <property type="match status" value="2"/>
</dbReference>
<dbReference type="Pfam" id="PF00575">
    <property type="entry name" value="S1"/>
    <property type="match status" value="1"/>
</dbReference>
<dbReference type="PIRSF" id="PIRSF005499">
    <property type="entry name" value="PNPase"/>
    <property type="match status" value="1"/>
</dbReference>
<dbReference type="SMART" id="SM00322">
    <property type="entry name" value="KH"/>
    <property type="match status" value="1"/>
</dbReference>
<dbReference type="SMART" id="SM00316">
    <property type="entry name" value="S1"/>
    <property type="match status" value="1"/>
</dbReference>
<dbReference type="SUPFAM" id="SSF54791">
    <property type="entry name" value="Eukaryotic type KH-domain (KH-domain type I)"/>
    <property type="match status" value="1"/>
</dbReference>
<dbReference type="SUPFAM" id="SSF50249">
    <property type="entry name" value="Nucleic acid-binding proteins"/>
    <property type="match status" value="1"/>
</dbReference>
<dbReference type="SUPFAM" id="SSF46915">
    <property type="entry name" value="Polynucleotide phosphorylase/guanosine pentaphosphate synthase (PNPase/GPSI), domain 3"/>
    <property type="match status" value="1"/>
</dbReference>
<dbReference type="SUPFAM" id="SSF55666">
    <property type="entry name" value="Ribonuclease PH domain 2-like"/>
    <property type="match status" value="2"/>
</dbReference>
<dbReference type="SUPFAM" id="SSF54211">
    <property type="entry name" value="Ribosomal protein S5 domain 2-like"/>
    <property type="match status" value="2"/>
</dbReference>
<dbReference type="PROSITE" id="PS50084">
    <property type="entry name" value="KH_TYPE_1"/>
    <property type="match status" value="1"/>
</dbReference>
<dbReference type="PROSITE" id="PS50126">
    <property type="entry name" value="S1"/>
    <property type="match status" value="1"/>
</dbReference>
<comment type="function">
    <text evidence="1">Involved in mRNA degradation. Catalyzes the phosphorolysis of single-stranded polyribonucleotides processively in the 3'- to 5'-direction.</text>
</comment>
<comment type="catalytic activity">
    <reaction evidence="1">
        <text>RNA(n+1) + phosphate = RNA(n) + a ribonucleoside 5'-diphosphate</text>
        <dbReference type="Rhea" id="RHEA:22096"/>
        <dbReference type="Rhea" id="RHEA-COMP:14527"/>
        <dbReference type="Rhea" id="RHEA-COMP:17342"/>
        <dbReference type="ChEBI" id="CHEBI:43474"/>
        <dbReference type="ChEBI" id="CHEBI:57930"/>
        <dbReference type="ChEBI" id="CHEBI:140395"/>
        <dbReference type="EC" id="2.7.7.8"/>
    </reaction>
</comment>
<comment type="cofactor">
    <cofactor evidence="1">
        <name>Mg(2+)</name>
        <dbReference type="ChEBI" id="CHEBI:18420"/>
    </cofactor>
</comment>
<comment type="subunit">
    <text evidence="1">Component of the RNA degradosome, which is a multiprotein complex involved in RNA processing and mRNA degradation.</text>
</comment>
<comment type="subcellular location">
    <subcellularLocation>
        <location evidence="1">Cytoplasm</location>
    </subcellularLocation>
</comment>
<comment type="similarity">
    <text evidence="1">Belongs to the polyribonucleotide nucleotidyltransferase family.</text>
</comment>
<comment type="sequence caution" evidence="3">
    <conflict type="erroneous initiation">
        <sequence resource="EMBL-CDS" id="ACB04243"/>
    </conflict>
</comment>
<keyword id="KW-0963">Cytoplasm</keyword>
<keyword id="KW-0460">Magnesium</keyword>
<keyword id="KW-0479">Metal-binding</keyword>
<keyword id="KW-0548">Nucleotidyltransferase</keyword>
<keyword id="KW-0694">RNA-binding</keyword>
<keyword id="KW-0808">Transferase</keyword>
<accession>B1XGX6</accession>
<evidence type="ECO:0000255" key="1">
    <source>
        <dbReference type="HAMAP-Rule" id="MF_01595"/>
    </source>
</evidence>
<evidence type="ECO:0000256" key="2">
    <source>
        <dbReference type="SAM" id="MobiDB-lite"/>
    </source>
</evidence>
<evidence type="ECO:0000305" key="3"/>